<proteinExistence type="inferred from homology"/>
<accession>A1TYM1</accession>
<organism>
    <name type="scientific">Marinobacter nauticus (strain ATCC 700491 / DSM 11845 / VT8)</name>
    <name type="common">Marinobacter aquaeolei</name>
    <dbReference type="NCBI Taxonomy" id="351348"/>
    <lineage>
        <taxon>Bacteria</taxon>
        <taxon>Pseudomonadati</taxon>
        <taxon>Pseudomonadota</taxon>
        <taxon>Gammaproteobacteria</taxon>
        <taxon>Pseudomonadales</taxon>
        <taxon>Marinobacteraceae</taxon>
        <taxon>Marinobacter</taxon>
    </lineage>
</organism>
<sequence length="206" mass="23105">MARYIGPKCKLSRREGTDLFLKSGVRALDSKCNIETPPGMHGARRGRLSEYGVQLREKQKVRRIYGVLEKQFRNYYKEAARGKGATGENLLQLLEGRLDNVVYRMGFGSTRAEARQLVSHKAVLVNDKPVNIPSYQVKPGDVVSVREKAKNQLRVKGALDLASSRAPVSWVEVDANKMSGVYKSVPERTELPADINENLIVELYSK</sequence>
<gene>
    <name evidence="1" type="primary">rpsD</name>
    <name type="ordered locus">Maqu_0743</name>
</gene>
<name>RS4_MARN8</name>
<protein>
    <recommendedName>
        <fullName evidence="1">Small ribosomal subunit protein uS4</fullName>
    </recommendedName>
    <alternativeName>
        <fullName evidence="2">30S ribosomal protein S4</fullName>
    </alternativeName>
</protein>
<feature type="chain" id="PRO_0000293309" description="Small ribosomal subunit protein uS4">
    <location>
        <begin position="1"/>
        <end position="206"/>
    </location>
</feature>
<feature type="domain" description="S4 RNA-binding" evidence="1">
    <location>
        <begin position="96"/>
        <end position="156"/>
    </location>
</feature>
<reference key="1">
    <citation type="journal article" date="2011" name="Appl. Environ. Microbiol.">
        <title>Genomic potential of Marinobacter aquaeolei, a biogeochemical 'opportunitroph'.</title>
        <authorList>
            <person name="Singer E."/>
            <person name="Webb E.A."/>
            <person name="Nelson W.C."/>
            <person name="Heidelberg J.F."/>
            <person name="Ivanova N."/>
            <person name="Pati A."/>
            <person name="Edwards K.J."/>
        </authorList>
    </citation>
    <scope>NUCLEOTIDE SEQUENCE [LARGE SCALE GENOMIC DNA]</scope>
    <source>
        <strain>ATCC 700491 / DSM 11845 / VT8</strain>
    </source>
</reference>
<evidence type="ECO:0000255" key="1">
    <source>
        <dbReference type="HAMAP-Rule" id="MF_01306"/>
    </source>
</evidence>
<evidence type="ECO:0000305" key="2"/>
<comment type="function">
    <text evidence="1">One of the primary rRNA binding proteins, it binds directly to 16S rRNA where it nucleates assembly of the body of the 30S subunit.</text>
</comment>
<comment type="function">
    <text evidence="1">With S5 and S12 plays an important role in translational accuracy.</text>
</comment>
<comment type="subunit">
    <text evidence="1">Part of the 30S ribosomal subunit. Contacts protein S5. The interaction surface between S4 and S5 is involved in control of translational fidelity.</text>
</comment>
<comment type="similarity">
    <text evidence="1">Belongs to the universal ribosomal protein uS4 family.</text>
</comment>
<dbReference type="EMBL" id="CP000514">
    <property type="protein sequence ID" value="ABM17840.1"/>
    <property type="molecule type" value="Genomic_DNA"/>
</dbReference>
<dbReference type="RefSeq" id="WP_011784263.1">
    <property type="nucleotide sequence ID" value="NC_008740.1"/>
</dbReference>
<dbReference type="SMR" id="A1TYM1"/>
<dbReference type="STRING" id="351348.Maqu_0743"/>
<dbReference type="KEGG" id="maq:Maqu_0743"/>
<dbReference type="eggNOG" id="COG0522">
    <property type="taxonomic scope" value="Bacteria"/>
</dbReference>
<dbReference type="HOGENOM" id="CLU_092403_0_2_6"/>
<dbReference type="OrthoDB" id="9803672at2"/>
<dbReference type="Proteomes" id="UP000000998">
    <property type="component" value="Chromosome"/>
</dbReference>
<dbReference type="GO" id="GO:0015935">
    <property type="term" value="C:small ribosomal subunit"/>
    <property type="evidence" value="ECO:0007669"/>
    <property type="project" value="InterPro"/>
</dbReference>
<dbReference type="GO" id="GO:0019843">
    <property type="term" value="F:rRNA binding"/>
    <property type="evidence" value="ECO:0007669"/>
    <property type="project" value="UniProtKB-UniRule"/>
</dbReference>
<dbReference type="GO" id="GO:0003735">
    <property type="term" value="F:structural constituent of ribosome"/>
    <property type="evidence" value="ECO:0007669"/>
    <property type="project" value="InterPro"/>
</dbReference>
<dbReference type="GO" id="GO:0042274">
    <property type="term" value="P:ribosomal small subunit biogenesis"/>
    <property type="evidence" value="ECO:0007669"/>
    <property type="project" value="TreeGrafter"/>
</dbReference>
<dbReference type="GO" id="GO:0006412">
    <property type="term" value="P:translation"/>
    <property type="evidence" value="ECO:0007669"/>
    <property type="project" value="UniProtKB-UniRule"/>
</dbReference>
<dbReference type="CDD" id="cd00165">
    <property type="entry name" value="S4"/>
    <property type="match status" value="1"/>
</dbReference>
<dbReference type="FunFam" id="1.10.1050.10:FF:000001">
    <property type="entry name" value="30S ribosomal protein S4"/>
    <property type="match status" value="1"/>
</dbReference>
<dbReference type="FunFam" id="3.10.290.10:FF:000001">
    <property type="entry name" value="30S ribosomal protein S4"/>
    <property type="match status" value="1"/>
</dbReference>
<dbReference type="Gene3D" id="1.10.1050.10">
    <property type="entry name" value="Ribosomal Protein S4 Delta 41, Chain A, domain 1"/>
    <property type="match status" value="1"/>
</dbReference>
<dbReference type="Gene3D" id="3.10.290.10">
    <property type="entry name" value="RNA-binding S4 domain"/>
    <property type="match status" value="1"/>
</dbReference>
<dbReference type="HAMAP" id="MF_01306_B">
    <property type="entry name" value="Ribosomal_uS4_B"/>
    <property type="match status" value="1"/>
</dbReference>
<dbReference type="InterPro" id="IPR022801">
    <property type="entry name" value="Ribosomal_uS4"/>
</dbReference>
<dbReference type="InterPro" id="IPR005709">
    <property type="entry name" value="Ribosomal_uS4_bac-type"/>
</dbReference>
<dbReference type="InterPro" id="IPR018079">
    <property type="entry name" value="Ribosomal_uS4_CS"/>
</dbReference>
<dbReference type="InterPro" id="IPR001912">
    <property type="entry name" value="Ribosomal_uS4_N"/>
</dbReference>
<dbReference type="InterPro" id="IPR002942">
    <property type="entry name" value="S4_RNA-bd"/>
</dbReference>
<dbReference type="InterPro" id="IPR036986">
    <property type="entry name" value="S4_RNA-bd_sf"/>
</dbReference>
<dbReference type="NCBIfam" id="NF003717">
    <property type="entry name" value="PRK05327.1"/>
    <property type="match status" value="1"/>
</dbReference>
<dbReference type="NCBIfam" id="TIGR01017">
    <property type="entry name" value="rpsD_bact"/>
    <property type="match status" value="1"/>
</dbReference>
<dbReference type="PANTHER" id="PTHR11831">
    <property type="entry name" value="30S 40S RIBOSOMAL PROTEIN"/>
    <property type="match status" value="1"/>
</dbReference>
<dbReference type="PANTHER" id="PTHR11831:SF4">
    <property type="entry name" value="SMALL RIBOSOMAL SUBUNIT PROTEIN US4M"/>
    <property type="match status" value="1"/>
</dbReference>
<dbReference type="Pfam" id="PF00163">
    <property type="entry name" value="Ribosomal_S4"/>
    <property type="match status" value="1"/>
</dbReference>
<dbReference type="Pfam" id="PF01479">
    <property type="entry name" value="S4"/>
    <property type="match status" value="1"/>
</dbReference>
<dbReference type="SMART" id="SM01390">
    <property type="entry name" value="Ribosomal_S4"/>
    <property type="match status" value="1"/>
</dbReference>
<dbReference type="SMART" id="SM00363">
    <property type="entry name" value="S4"/>
    <property type="match status" value="1"/>
</dbReference>
<dbReference type="SUPFAM" id="SSF55174">
    <property type="entry name" value="Alpha-L RNA-binding motif"/>
    <property type="match status" value="1"/>
</dbReference>
<dbReference type="PROSITE" id="PS00632">
    <property type="entry name" value="RIBOSOMAL_S4"/>
    <property type="match status" value="1"/>
</dbReference>
<dbReference type="PROSITE" id="PS50889">
    <property type="entry name" value="S4"/>
    <property type="match status" value="1"/>
</dbReference>
<keyword id="KW-0687">Ribonucleoprotein</keyword>
<keyword id="KW-0689">Ribosomal protein</keyword>
<keyword id="KW-0694">RNA-binding</keyword>
<keyword id="KW-0699">rRNA-binding</keyword>